<proteinExistence type="inferred from homology"/>
<comment type="function">
    <text evidence="1">Catalyzes the pyruvoyl-dependent decarboxylation of aspartate to produce beta-alanine.</text>
</comment>
<comment type="catalytic activity">
    <reaction evidence="1">
        <text>L-aspartate + H(+) = beta-alanine + CO2</text>
        <dbReference type="Rhea" id="RHEA:19497"/>
        <dbReference type="ChEBI" id="CHEBI:15378"/>
        <dbReference type="ChEBI" id="CHEBI:16526"/>
        <dbReference type="ChEBI" id="CHEBI:29991"/>
        <dbReference type="ChEBI" id="CHEBI:57966"/>
        <dbReference type="EC" id="4.1.1.11"/>
    </reaction>
</comment>
<comment type="cofactor">
    <cofactor evidence="1">
        <name>pyruvate</name>
        <dbReference type="ChEBI" id="CHEBI:15361"/>
    </cofactor>
    <text evidence="1">Binds 1 pyruvoyl group covalently per subunit.</text>
</comment>
<comment type="pathway">
    <text evidence="1">Cofactor biosynthesis; (R)-pantothenate biosynthesis; beta-alanine from L-aspartate: step 1/1.</text>
</comment>
<comment type="subunit">
    <text evidence="1">Heterooctamer of four alpha and four beta subunits.</text>
</comment>
<comment type="subcellular location">
    <subcellularLocation>
        <location evidence="1">Cytoplasm</location>
    </subcellularLocation>
</comment>
<comment type="PTM">
    <text evidence="1">Is synthesized initially as an inactive proenzyme, which is activated by self-cleavage at a specific serine bond to produce a beta-subunit with a hydroxyl group at its C-terminus and an alpha-subunit with a pyruvoyl group at its N-terminus.</text>
</comment>
<comment type="similarity">
    <text evidence="1">Belongs to the PanD family.</text>
</comment>
<comment type="sequence caution" evidence="2">
    <conflict type="erroneous initiation">
        <sequence resource="EMBL-CDS" id="AAO05781"/>
    </conflict>
</comment>
<keyword id="KW-0068">Autocatalytic cleavage</keyword>
<keyword id="KW-0963">Cytoplasm</keyword>
<keyword id="KW-0210">Decarboxylase</keyword>
<keyword id="KW-0456">Lyase</keyword>
<keyword id="KW-0566">Pantothenate biosynthesis</keyword>
<keyword id="KW-0670">Pyruvate</keyword>
<keyword id="KW-0704">Schiff base</keyword>
<keyword id="KW-0865">Zymogen</keyword>
<sequence>MIRTFMNSKIHRARVTESNLNYVGSITIDANILDAVDILPNEKVAIVNNNNGARFETYVIAGERGSGKMCLNGAASRLVEVGDVIIIMTYAQLNEDEMVDHSPKVAVLNENNEIIEMINEKENTISNV</sequence>
<evidence type="ECO:0000255" key="1">
    <source>
        <dbReference type="HAMAP-Rule" id="MF_00446"/>
    </source>
</evidence>
<evidence type="ECO:0000305" key="2"/>
<reference key="1">
    <citation type="journal article" date="2003" name="Mol. Microbiol.">
        <title>Genome-based analysis of virulence genes in a non-biofilm-forming Staphylococcus epidermidis strain (ATCC 12228).</title>
        <authorList>
            <person name="Zhang Y.-Q."/>
            <person name="Ren S.-X."/>
            <person name="Li H.-L."/>
            <person name="Wang Y.-X."/>
            <person name="Fu G."/>
            <person name="Yang J."/>
            <person name="Qin Z.-Q."/>
            <person name="Miao Y.-G."/>
            <person name="Wang W.-Y."/>
            <person name="Chen R.-S."/>
            <person name="Shen Y."/>
            <person name="Chen Z."/>
            <person name="Yuan Z.-H."/>
            <person name="Zhao G.-P."/>
            <person name="Qu D."/>
            <person name="Danchin A."/>
            <person name="Wen Y.-M."/>
        </authorList>
    </citation>
    <scope>NUCLEOTIDE SEQUENCE [LARGE SCALE GENOMIC DNA]</scope>
    <source>
        <strain>ATCC 12228 / FDA PCI 1200</strain>
    </source>
</reference>
<organism>
    <name type="scientific">Staphylococcus epidermidis (strain ATCC 12228 / FDA PCI 1200)</name>
    <dbReference type="NCBI Taxonomy" id="176280"/>
    <lineage>
        <taxon>Bacteria</taxon>
        <taxon>Bacillati</taxon>
        <taxon>Bacillota</taxon>
        <taxon>Bacilli</taxon>
        <taxon>Bacillales</taxon>
        <taxon>Staphylococcaceae</taxon>
        <taxon>Staphylococcus</taxon>
    </lineage>
</organism>
<accession>Q8CMZ4</accession>
<gene>
    <name evidence="1" type="primary">panD</name>
    <name type="ordered locus">SE_2139</name>
</gene>
<feature type="chain" id="PRO_0000023169" description="Aspartate 1-decarboxylase beta chain" evidence="1">
    <location>
        <begin position="1"/>
        <end position="24"/>
    </location>
</feature>
<feature type="chain" id="PRO_0000023170" description="Aspartate 1-decarboxylase alpha chain" evidence="1">
    <location>
        <begin position="25"/>
        <end position="128"/>
    </location>
</feature>
<feature type="active site" description="Schiff-base intermediate with substrate; via pyruvic acid" evidence="1">
    <location>
        <position position="25"/>
    </location>
</feature>
<feature type="active site" description="Proton donor" evidence="1">
    <location>
        <position position="58"/>
    </location>
</feature>
<feature type="binding site" evidence="1">
    <location>
        <position position="57"/>
    </location>
    <ligand>
        <name>substrate</name>
    </ligand>
</feature>
<feature type="binding site" evidence="1">
    <location>
        <begin position="73"/>
        <end position="75"/>
    </location>
    <ligand>
        <name>substrate</name>
    </ligand>
</feature>
<feature type="modified residue" description="Pyruvic acid (Ser)" evidence="1">
    <location>
        <position position="25"/>
    </location>
</feature>
<name>PAND_STAES</name>
<protein>
    <recommendedName>
        <fullName evidence="1">Aspartate 1-decarboxylase</fullName>
        <ecNumber evidence="1">4.1.1.11</ecNumber>
    </recommendedName>
    <alternativeName>
        <fullName evidence="1">Aspartate alpha-decarboxylase</fullName>
    </alternativeName>
    <component>
        <recommendedName>
            <fullName evidence="1">Aspartate 1-decarboxylase beta chain</fullName>
        </recommendedName>
    </component>
    <component>
        <recommendedName>
            <fullName evidence="1">Aspartate 1-decarboxylase alpha chain</fullName>
        </recommendedName>
    </component>
</protein>
<dbReference type="EC" id="4.1.1.11" evidence="1"/>
<dbReference type="EMBL" id="AE015929">
    <property type="protein sequence ID" value="AAO05781.1"/>
    <property type="status" value="ALT_INIT"/>
    <property type="molecule type" value="Genomic_DNA"/>
</dbReference>
<dbReference type="RefSeq" id="NP_765694.1">
    <property type="nucleotide sequence ID" value="NC_004461.1"/>
</dbReference>
<dbReference type="RefSeq" id="WP_001830619.1">
    <property type="nucleotide sequence ID" value="NZ_WBME01000005.1"/>
</dbReference>
<dbReference type="SMR" id="Q8CMZ4"/>
<dbReference type="GeneID" id="50017783"/>
<dbReference type="KEGG" id="sep:SE_2139"/>
<dbReference type="PATRIC" id="fig|176280.10.peg.2091"/>
<dbReference type="eggNOG" id="COG0853">
    <property type="taxonomic scope" value="Bacteria"/>
</dbReference>
<dbReference type="HOGENOM" id="CLU_115305_2_0_9"/>
<dbReference type="OrthoDB" id="9803983at2"/>
<dbReference type="UniPathway" id="UPA00028">
    <property type="reaction ID" value="UER00002"/>
</dbReference>
<dbReference type="Proteomes" id="UP000001411">
    <property type="component" value="Chromosome"/>
</dbReference>
<dbReference type="GO" id="GO:0005829">
    <property type="term" value="C:cytosol"/>
    <property type="evidence" value="ECO:0007669"/>
    <property type="project" value="TreeGrafter"/>
</dbReference>
<dbReference type="GO" id="GO:0004068">
    <property type="term" value="F:aspartate 1-decarboxylase activity"/>
    <property type="evidence" value="ECO:0007669"/>
    <property type="project" value="UniProtKB-UniRule"/>
</dbReference>
<dbReference type="GO" id="GO:0006523">
    <property type="term" value="P:alanine biosynthetic process"/>
    <property type="evidence" value="ECO:0007669"/>
    <property type="project" value="InterPro"/>
</dbReference>
<dbReference type="GO" id="GO:0015940">
    <property type="term" value="P:pantothenate biosynthetic process"/>
    <property type="evidence" value="ECO:0007669"/>
    <property type="project" value="UniProtKB-UniRule"/>
</dbReference>
<dbReference type="CDD" id="cd06919">
    <property type="entry name" value="Asp_decarbox"/>
    <property type="match status" value="1"/>
</dbReference>
<dbReference type="Gene3D" id="2.40.40.20">
    <property type="match status" value="1"/>
</dbReference>
<dbReference type="HAMAP" id="MF_00446">
    <property type="entry name" value="PanD"/>
    <property type="match status" value="1"/>
</dbReference>
<dbReference type="InterPro" id="IPR009010">
    <property type="entry name" value="Asp_de-COase-like_dom_sf"/>
</dbReference>
<dbReference type="InterPro" id="IPR003190">
    <property type="entry name" value="Asp_decarbox"/>
</dbReference>
<dbReference type="NCBIfam" id="TIGR00223">
    <property type="entry name" value="panD"/>
    <property type="match status" value="1"/>
</dbReference>
<dbReference type="PANTHER" id="PTHR21012">
    <property type="entry name" value="ASPARTATE 1-DECARBOXYLASE"/>
    <property type="match status" value="1"/>
</dbReference>
<dbReference type="PANTHER" id="PTHR21012:SF0">
    <property type="entry name" value="ASPARTATE 1-DECARBOXYLASE"/>
    <property type="match status" value="1"/>
</dbReference>
<dbReference type="Pfam" id="PF02261">
    <property type="entry name" value="Asp_decarbox"/>
    <property type="match status" value="1"/>
</dbReference>
<dbReference type="PIRSF" id="PIRSF006246">
    <property type="entry name" value="Asp_decarbox"/>
    <property type="match status" value="1"/>
</dbReference>
<dbReference type="SUPFAM" id="SSF50692">
    <property type="entry name" value="ADC-like"/>
    <property type="match status" value="1"/>
</dbReference>